<sequence>MSKLVLVLNCGSSSLKFAVVDAESGAEHLTGLAECLGLPEARMKWKLDGKHEAQLGAGAAHVEALSFMVETILASKPELKANLGAIGHRIVHGGEQFTKSALITDEVLKGIQDAATFAPLHNPAHIIGIEAAKANFPGLKNVAVFDTAFHQTMPEESYLYALPYNLYKEHGIRRYGMHGTSHLFITREVAGLLNKPVEEVNIINCHLGNGASVCAIKNGESVDTSMGLTPLEGLVMGTRCGDIDPAIVFHLHDALGYSVEQINNMLTKESGLQGLTQVTSDCRFVEDNYGEKEEATRAMDVFCHRLAKYVAGYTATLEGRLDAITFTGGIGENSAPIREMVLNRLGIFGIEVDGEANLKARFGGEGTITTANSRIPAMVISTNEELVIAEDTAKLAGL</sequence>
<evidence type="ECO:0000255" key="1">
    <source>
        <dbReference type="HAMAP-Rule" id="MF_00020"/>
    </source>
</evidence>
<accession>Q5E6L4</accession>
<dbReference type="EC" id="2.7.2.1" evidence="1"/>
<dbReference type="EMBL" id="CP000020">
    <property type="protein sequence ID" value="AAW85332.1"/>
    <property type="molecule type" value="Genomic_DNA"/>
</dbReference>
<dbReference type="RefSeq" id="WP_005418325.1">
    <property type="nucleotide sequence ID" value="NZ_CAWLES010000001.1"/>
</dbReference>
<dbReference type="RefSeq" id="YP_204220.1">
    <property type="nucleotide sequence ID" value="NC_006840.2"/>
</dbReference>
<dbReference type="SMR" id="Q5E6L4"/>
<dbReference type="STRING" id="312309.VF_0837"/>
<dbReference type="EnsemblBacteria" id="AAW85332">
    <property type="protein sequence ID" value="AAW85332"/>
    <property type="gene ID" value="VF_0837"/>
</dbReference>
<dbReference type="GeneID" id="54163505"/>
<dbReference type="KEGG" id="vfi:VF_0837"/>
<dbReference type="PATRIC" id="fig|312309.11.peg.830"/>
<dbReference type="eggNOG" id="COG0282">
    <property type="taxonomic scope" value="Bacteria"/>
</dbReference>
<dbReference type="HOGENOM" id="CLU_020352_0_1_6"/>
<dbReference type="OrthoDB" id="9802453at2"/>
<dbReference type="UniPathway" id="UPA00340">
    <property type="reaction ID" value="UER00458"/>
</dbReference>
<dbReference type="Proteomes" id="UP000000537">
    <property type="component" value="Chromosome I"/>
</dbReference>
<dbReference type="GO" id="GO:0005829">
    <property type="term" value="C:cytosol"/>
    <property type="evidence" value="ECO:0007669"/>
    <property type="project" value="TreeGrafter"/>
</dbReference>
<dbReference type="GO" id="GO:0008776">
    <property type="term" value="F:acetate kinase activity"/>
    <property type="evidence" value="ECO:0007669"/>
    <property type="project" value="UniProtKB-UniRule"/>
</dbReference>
<dbReference type="GO" id="GO:0005524">
    <property type="term" value="F:ATP binding"/>
    <property type="evidence" value="ECO:0007669"/>
    <property type="project" value="UniProtKB-KW"/>
</dbReference>
<dbReference type="GO" id="GO:0000287">
    <property type="term" value="F:magnesium ion binding"/>
    <property type="evidence" value="ECO:0007669"/>
    <property type="project" value="UniProtKB-UniRule"/>
</dbReference>
<dbReference type="GO" id="GO:0006083">
    <property type="term" value="P:acetate metabolic process"/>
    <property type="evidence" value="ECO:0007669"/>
    <property type="project" value="TreeGrafter"/>
</dbReference>
<dbReference type="GO" id="GO:0006085">
    <property type="term" value="P:acetyl-CoA biosynthetic process"/>
    <property type="evidence" value="ECO:0007669"/>
    <property type="project" value="UniProtKB-UniRule"/>
</dbReference>
<dbReference type="CDD" id="cd24010">
    <property type="entry name" value="ASKHA_NBD_AcK_PK"/>
    <property type="match status" value="1"/>
</dbReference>
<dbReference type="FunFam" id="3.30.420.40:FF:000041">
    <property type="entry name" value="Acetate kinase"/>
    <property type="match status" value="1"/>
</dbReference>
<dbReference type="FunFam" id="3.30.420.40:FF:000042">
    <property type="entry name" value="Acetate kinase"/>
    <property type="match status" value="1"/>
</dbReference>
<dbReference type="Gene3D" id="3.30.420.40">
    <property type="match status" value="2"/>
</dbReference>
<dbReference type="HAMAP" id="MF_00020">
    <property type="entry name" value="Acetate_kinase"/>
    <property type="match status" value="1"/>
</dbReference>
<dbReference type="InterPro" id="IPR004372">
    <property type="entry name" value="Ac/propionate_kinase"/>
</dbReference>
<dbReference type="InterPro" id="IPR000890">
    <property type="entry name" value="Aliphatic_acid_kin_short-chain"/>
</dbReference>
<dbReference type="InterPro" id="IPR023865">
    <property type="entry name" value="Aliphatic_acid_kinase_CS"/>
</dbReference>
<dbReference type="InterPro" id="IPR043129">
    <property type="entry name" value="ATPase_NBD"/>
</dbReference>
<dbReference type="NCBIfam" id="TIGR00016">
    <property type="entry name" value="ackA"/>
    <property type="match status" value="1"/>
</dbReference>
<dbReference type="PANTHER" id="PTHR21060">
    <property type="entry name" value="ACETATE KINASE"/>
    <property type="match status" value="1"/>
</dbReference>
<dbReference type="PANTHER" id="PTHR21060:SF21">
    <property type="entry name" value="ACETATE KINASE"/>
    <property type="match status" value="1"/>
</dbReference>
<dbReference type="Pfam" id="PF00871">
    <property type="entry name" value="Acetate_kinase"/>
    <property type="match status" value="1"/>
</dbReference>
<dbReference type="PIRSF" id="PIRSF000722">
    <property type="entry name" value="Acetate_prop_kin"/>
    <property type="match status" value="1"/>
</dbReference>
<dbReference type="PRINTS" id="PR00471">
    <property type="entry name" value="ACETATEKNASE"/>
</dbReference>
<dbReference type="SUPFAM" id="SSF53067">
    <property type="entry name" value="Actin-like ATPase domain"/>
    <property type="match status" value="2"/>
</dbReference>
<dbReference type="PROSITE" id="PS01075">
    <property type="entry name" value="ACETATE_KINASE_1"/>
    <property type="match status" value="1"/>
</dbReference>
<dbReference type="PROSITE" id="PS01076">
    <property type="entry name" value="ACETATE_KINASE_2"/>
    <property type="match status" value="1"/>
</dbReference>
<keyword id="KW-0067">ATP-binding</keyword>
<keyword id="KW-0963">Cytoplasm</keyword>
<keyword id="KW-0418">Kinase</keyword>
<keyword id="KW-0460">Magnesium</keyword>
<keyword id="KW-0479">Metal-binding</keyword>
<keyword id="KW-0547">Nucleotide-binding</keyword>
<keyword id="KW-1185">Reference proteome</keyword>
<keyword id="KW-0808">Transferase</keyword>
<feature type="chain" id="PRO_0000107637" description="Acetate kinase 1">
    <location>
        <begin position="1"/>
        <end position="398"/>
    </location>
</feature>
<feature type="active site" description="Proton donor/acceptor" evidence="1">
    <location>
        <position position="146"/>
    </location>
</feature>
<feature type="binding site" evidence="1">
    <location>
        <position position="9"/>
    </location>
    <ligand>
        <name>Mg(2+)</name>
        <dbReference type="ChEBI" id="CHEBI:18420"/>
    </ligand>
</feature>
<feature type="binding site" evidence="1">
    <location>
        <position position="16"/>
    </location>
    <ligand>
        <name>ATP</name>
        <dbReference type="ChEBI" id="CHEBI:30616"/>
    </ligand>
</feature>
<feature type="binding site" evidence="1">
    <location>
        <position position="89"/>
    </location>
    <ligand>
        <name>substrate</name>
    </ligand>
</feature>
<feature type="binding site" evidence="1">
    <location>
        <begin position="206"/>
        <end position="210"/>
    </location>
    <ligand>
        <name>ATP</name>
        <dbReference type="ChEBI" id="CHEBI:30616"/>
    </ligand>
</feature>
<feature type="binding site" evidence="1">
    <location>
        <begin position="281"/>
        <end position="283"/>
    </location>
    <ligand>
        <name>ATP</name>
        <dbReference type="ChEBI" id="CHEBI:30616"/>
    </ligand>
</feature>
<feature type="binding site" evidence="1">
    <location>
        <begin position="329"/>
        <end position="333"/>
    </location>
    <ligand>
        <name>ATP</name>
        <dbReference type="ChEBI" id="CHEBI:30616"/>
    </ligand>
</feature>
<feature type="binding site" evidence="1">
    <location>
        <position position="384"/>
    </location>
    <ligand>
        <name>Mg(2+)</name>
        <dbReference type="ChEBI" id="CHEBI:18420"/>
    </ligand>
</feature>
<feature type="site" description="Transition state stabilizer" evidence="1">
    <location>
        <position position="178"/>
    </location>
</feature>
<feature type="site" description="Transition state stabilizer" evidence="1">
    <location>
        <position position="239"/>
    </location>
</feature>
<gene>
    <name evidence="1" type="primary">ackA1</name>
    <name type="ordered locus">VF_0837</name>
</gene>
<organism>
    <name type="scientific">Aliivibrio fischeri (strain ATCC 700601 / ES114)</name>
    <name type="common">Vibrio fischeri</name>
    <dbReference type="NCBI Taxonomy" id="312309"/>
    <lineage>
        <taxon>Bacteria</taxon>
        <taxon>Pseudomonadati</taxon>
        <taxon>Pseudomonadota</taxon>
        <taxon>Gammaproteobacteria</taxon>
        <taxon>Vibrionales</taxon>
        <taxon>Vibrionaceae</taxon>
        <taxon>Aliivibrio</taxon>
    </lineage>
</organism>
<protein>
    <recommendedName>
        <fullName evidence="1">Acetate kinase 1</fullName>
        <ecNumber evidence="1">2.7.2.1</ecNumber>
    </recommendedName>
    <alternativeName>
        <fullName evidence="1">Acetokinase 1</fullName>
    </alternativeName>
</protein>
<proteinExistence type="inferred from homology"/>
<name>ACKA1_ALIF1</name>
<comment type="function">
    <text evidence="1">Catalyzes the formation of acetyl phosphate from acetate and ATP. Can also catalyze the reverse reaction.</text>
</comment>
<comment type="catalytic activity">
    <reaction evidence="1">
        <text>acetate + ATP = acetyl phosphate + ADP</text>
        <dbReference type="Rhea" id="RHEA:11352"/>
        <dbReference type="ChEBI" id="CHEBI:22191"/>
        <dbReference type="ChEBI" id="CHEBI:30089"/>
        <dbReference type="ChEBI" id="CHEBI:30616"/>
        <dbReference type="ChEBI" id="CHEBI:456216"/>
        <dbReference type="EC" id="2.7.2.1"/>
    </reaction>
</comment>
<comment type="cofactor">
    <cofactor evidence="1">
        <name>Mg(2+)</name>
        <dbReference type="ChEBI" id="CHEBI:18420"/>
    </cofactor>
    <cofactor evidence="1">
        <name>Mn(2+)</name>
        <dbReference type="ChEBI" id="CHEBI:29035"/>
    </cofactor>
    <text evidence="1">Mg(2+). Can also accept Mn(2+).</text>
</comment>
<comment type="pathway">
    <text evidence="1">Metabolic intermediate biosynthesis; acetyl-CoA biosynthesis; acetyl-CoA from acetate: step 1/2.</text>
</comment>
<comment type="subunit">
    <text evidence="1">Homodimer.</text>
</comment>
<comment type="subcellular location">
    <subcellularLocation>
        <location evidence="1">Cytoplasm</location>
    </subcellularLocation>
</comment>
<comment type="similarity">
    <text evidence="1">Belongs to the acetokinase family.</text>
</comment>
<reference key="1">
    <citation type="journal article" date="2005" name="Proc. Natl. Acad. Sci. U.S.A.">
        <title>Complete genome sequence of Vibrio fischeri: a symbiotic bacterium with pathogenic congeners.</title>
        <authorList>
            <person name="Ruby E.G."/>
            <person name="Urbanowski M."/>
            <person name="Campbell J."/>
            <person name="Dunn A."/>
            <person name="Faini M."/>
            <person name="Gunsalus R."/>
            <person name="Lostroh P."/>
            <person name="Lupp C."/>
            <person name="McCann J."/>
            <person name="Millikan D."/>
            <person name="Schaefer A."/>
            <person name="Stabb E."/>
            <person name="Stevens A."/>
            <person name="Visick K."/>
            <person name="Whistler C."/>
            <person name="Greenberg E.P."/>
        </authorList>
    </citation>
    <scope>NUCLEOTIDE SEQUENCE [LARGE SCALE GENOMIC DNA]</scope>
    <source>
        <strain>ATCC 700601 / ES114</strain>
    </source>
</reference>